<proteinExistence type="inferred from homology"/>
<accession>Q5NFU6</accession>
<name>PLSY_FRATT</name>
<comment type="function">
    <text evidence="1">Catalyzes the transfer of an acyl group from acyl-phosphate (acyl-PO(4)) to glycerol-3-phosphate (G3P) to form lysophosphatidic acid (LPA). This enzyme utilizes acyl-phosphate as fatty acyl donor, but not acyl-CoA or acyl-ACP.</text>
</comment>
<comment type="catalytic activity">
    <reaction evidence="1">
        <text>an acyl phosphate + sn-glycerol 3-phosphate = a 1-acyl-sn-glycero-3-phosphate + phosphate</text>
        <dbReference type="Rhea" id="RHEA:34075"/>
        <dbReference type="ChEBI" id="CHEBI:43474"/>
        <dbReference type="ChEBI" id="CHEBI:57597"/>
        <dbReference type="ChEBI" id="CHEBI:57970"/>
        <dbReference type="ChEBI" id="CHEBI:59918"/>
        <dbReference type="EC" id="2.3.1.275"/>
    </reaction>
</comment>
<comment type="pathway">
    <text evidence="1">Lipid metabolism; phospholipid metabolism.</text>
</comment>
<comment type="subunit">
    <text evidence="1">Probably interacts with PlsX.</text>
</comment>
<comment type="subcellular location">
    <subcellularLocation>
        <location evidence="1">Cell inner membrane</location>
        <topology evidence="1">Multi-pass membrane protein</topology>
    </subcellularLocation>
</comment>
<comment type="similarity">
    <text evidence="1">Belongs to the PlsY family.</text>
</comment>
<sequence>MNFLNFSILIFAYLLGSINSAIIVCYIFRLPSPRSVGSGNPGMTNVLRIGGKVPAAITLIFDILKGLVPVVIAKVLTGNEFITACTALYAILGHIFPIFFGFKGGKGVATLIGTLFGFSWILGLIFVITWLCVAIITRYSSLSALVATVIASFSVIFTSDLQVAAPFLIIAIIILVKHKGNIQRLISRQESKIGDKAKAKNDSN</sequence>
<reference key="1">
    <citation type="journal article" date="2005" name="Nat. Genet.">
        <title>The complete genome sequence of Francisella tularensis, the causative agent of tularemia.</title>
        <authorList>
            <person name="Larsson P."/>
            <person name="Oyston P.C.F."/>
            <person name="Chain P."/>
            <person name="Chu M.C."/>
            <person name="Duffield M."/>
            <person name="Fuxelius H.-H."/>
            <person name="Garcia E."/>
            <person name="Haelltorp G."/>
            <person name="Johansson D."/>
            <person name="Isherwood K.E."/>
            <person name="Karp P.D."/>
            <person name="Larsson E."/>
            <person name="Liu Y."/>
            <person name="Michell S."/>
            <person name="Prior J."/>
            <person name="Prior R."/>
            <person name="Malfatti S."/>
            <person name="Sjoestedt A."/>
            <person name="Svensson K."/>
            <person name="Thompson N."/>
            <person name="Vergez L."/>
            <person name="Wagg J.K."/>
            <person name="Wren B.W."/>
            <person name="Lindler L.E."/>
            <person name="Andersson S.G.E."/>
            <person name="Forsman M."/>
            <person name="Titball R.W."/>
        </authorList>
    </citation>
    <scope>NUCLEOTIDE SEQUENCE [LARGE SCALE GENOMIC DNA]</scope>
    <source>
        <strain>SCHU S4 / Schu 4</strain>
    </source>
</reference>
<gene>
    <name evidence="1" type="primary">plsY</name>
    <name type="ordered locus">FTT_1123</name>
</gene>
<organism>
    <name type="scientific">Francisella tularensis subsp. tularensis (strain SCHU S4 / Schu 4)</name>
    <dbReference type="NCBI Taxonomy" id="177416"/>
    <lineage>
        <taxon>Bacteria</taxon>
        <taxon>Pseudomonadati</taxon>
        <taxon>Pseudomonadota</taxon>
        <taxon>Gammaproteobacteria</taxon>
        <taxon>Thiotrichales</taxon>
        <taxon>Francisellaceae</taxon>
        <taxon>Francisella</taxon>
    </lineage>
</organism>
<keyword id="KW-0997">Cell inner membrane</keyword>
<keyword id="KW-1003">Cell membrane</keyword>
<keyword id="KW-0444">Lipid biosynthesis</keyword>
<keyword id="KW-0443">Lipid metabolism</keyword>
<keyword id="KW-0472">Membrane</keyword>
<keyword id="KW-0594">Phospholipid biosynthesis</keyword>
<keyword id="KW-1208">Phospholipid metabolism</keyword>
<keyword id="KW-1185">Reference proteome</keyword>
<keyword id="KW-0808">Transferase</keyword>
<keyword id="KW-0812">Transmembrane</keyword>
<keyword id="KW-1133">Transmembrane helix</keyword>
<evidence type="ECO:0000255" key="1">
    <source>
        <dbReference type="HAMAP-Rule" id="MF_01043"/>
    </source>
</evidence>
<feature type="chain" id="PRO_0000188371" description="Glycerol-3-phosphate acyltransferase">
    <location>
        <begin position="1"/>
        <end position="204"/>
    </location>
</feature>
<feature type="transmembrane region" description="Helical" evidence="1">
    <location>
        <begin position="8"/>
        <end position="28"/>
    </location>
</feature>
<feature type="transmembrane region" description="Helical" evidence="1">
    <location>
        <begin position="53"/>
        <end position="73"/>
    </location>
</feature>
<feature type="transmembrane region" description="Helical" evidence="1">
    <location>
        <begin position="81"/>
        <end position="101"/>
    </location>
</feature>
<feature type="transmembrane region" description="Helical" evidence="1">
    <location>
        <begin position="116"/>
        <end position="136"/>
    </location>
</feature>
<feature type="transmembrane region" description="Helical" evidence="1">
    <location>
        <begin position="155"/>
        <end position="175"/>
    </location>
</feature>
<protein>
    <recommendedName>
        <fullName evidence="1">Glycerol-3-phosphate acyltransferase</fullName>
    </recommendedName>
    <alternativeName>
        <fullName evidence="1">Acyl-PO4 G3P acyltransferase</fullName>
    </alternativeName>
    <alternativeName>
        <fullName evidence="1">Acyl-phosphate--glycerol-3-phosphate acyltransferase</fullName>
    </alternativeName>
    <alternativeName>
        <fullName evidence="1">G3P acyltransferase</fullName>
        <shortName evidence="1">GPAT</shortName>
        <ecNumber evidence="1">2.3.1.275</ecNumber>
    </alternativeName>
    <alternativeName>
        <fullName evidence="1">Lysophosphatidic acid synthase</fullName>
        <shortName evidence="1">LPA synthase</shortName>
    </alternativeName>
</protein>
<dbReference type="EC" id="2.3.1.275" evidence="1"/>
<dbReference type="EMBL" id="AJ749949">
    <property type="protein sequence ID" value="CAG45756.1"/>
    <property type="molecule type" value="Genomic_DNA"/>
</dbReference>
<dbReference type="RefSeq" id="WP_003021296.1">
    <property type="nucleotide sequence ID" value="NC_006570.2"/>
</dbReference>
<dbReference type="RefSeq" id="YP_170096.1">
    <property type="nucleotide sequence ID" value="NC_006570.2"/>
</dbReference>
<dbReference type="SMR" id="Q5NFU6"/>
<dbReference type="STRING" id="177416.FTT_1123"/>
<dbReference type="DNASU" id="3191266"/>
<dbReference type="EnsemblBacteria" id="CAG45756">
    <property type="protein sequence ID" value="CAG45756"/>
    <property type="gene ID" value="FTT_1123"/>
</dbReference>
<dbReference type="KEGG" id="ftu:FTT_1123"/>
<dbReference type="eggNOG" id="COG0344">
    <property type="taxonomic scope" value="Bacteria"/>
</dbReference>
<dbReference type="OrthoDB" id="9777124at2"/>
<dbReference type="UniPathway" id="UPA00085"/>
<dbReference type="Proteomes" id="UP000001174">
    <property type="component" value="Chromosome"/>
</dbReference>
<dbReference type="GO" id="GO:0005886">
    <property type="term" value="C:plasma membrane"/>
    <property type="evidence" value="ECO:0007669"/>
    <property type="project" value="UniProtKB-SubCell"/>
</dbReference>
<dbReference type="GO" id="GO:0043772">
    <property type="term" value="F:acyl-phosphate glycerol-3-phosphate acyltransferase activity"/>
    <property type="evidence" value="ECO:0007669"/>
    <property type="project" value="UniProtKB-UniRule"/>
</dbReference>
<dbReference type="GO" id="GO:0008654">
    <property type="term" value="P:phospholipid biosynthetic process"/>
    <property type="evidence" value="ECO:0007669"/>
    <property type="project" value="UniProtKB-UniRule"/>
</dbReference>
<dbReference type="HAMAP" id="MF_01043">
    <property type="entry name" value="PlsY"/>
    <property type="match status" value="1"/>
</dbReference>
<dbReference type="InterPro" id="IPR003811">
    <property type="entry name" value="G3P_acylTferase_PlsY"/>
</dbReference>
<dbReference type="NCBIfam" id="TIGR00023">
    <property type="entry name" value="glycerol-3-phosphate 1-O-acyltransferase PlsY"/>
    <property type="match status" value="1"/>
</dbReference>
<dbReference type="PANTHER" id="PTHR30309:SF0">
    <property type="entry name" value="GLYCEROL-3-PHOSPHATE ACYLTRANSFERASE-RELATED"/>
    <property type="match status" value="1"/>
</dbReference>
<dbReference type="PANTHER" id="PTHR30309">
    <property type="entry name" value="INNER MEMBRANE PROTEIN YGIH"/>
    <property type="match status" value="1"/>
</dbReference>
<dbReference type="Pfam" id="PF02660">
    <property type="entry name" value="G3P_acyltransf"/>
    <property type="match status" value="1"/>
</dbReference>
<dbReference type="SMART" id="SM01207">
    <property type="entry name" value="G3P_acyltransf"/>
    <property type="match status" value="1"/>
</dbReference>